<name>LEPA_PECCP</name>
<sequence>MKHIRNFSIIAHIDHGKSTLSDRIIQICGGLTEREMAAQVLDSMDLERERGITIKAQSVTLDYKAQDGQTYQLNFIDTPGHVDFSYEVSRSLAACEGALLVVDAGQGVEAQTLANCYTALDMNLEVVPVLNKIDLPAADPDRVAQEIEDIVGIDATDAVRCSAKTGIGVPDVLDRLVRDIPPPEGSPDEPLQALIIDSWFDNYLGVVSLVRIKNGTMRKGDKIKVMSTGQVYNADRLGIFTPKQIDRDVLNCGEVGWLVCAIKDILGAPVGDTLTLARQPAEKALPGFKKVKPQVYAGLFPISSDDYESFRDALGKLSLNDASLFYEPESSTALGFGFRCGFLGLLHMEIIQERLEREYDLDLITTAPTVVYEVETTAKETVYVDSPSKLPPLNNIQELREPIAECHMLLPQEYLGNVITLCIEKRGVQTNMVYHGNQVALTYEIPMAEVVLDFFDRLKSTSRGYASLDYSFKRFQTSDMVRVDVLINNERVDALALITHRDNSQYRGRELVEKMKDLIPRQQFDIAIQAAIGNHIIARSTVKQLRKNVLAKCYGGDVSRKKKLLQKQKDGKKRMKQVGNVELPQEAFLAILHVGKDSK</sequence>
<dbReference type="EC" id="3.6.5.n1" evidence="1"/>
<dbReference type="EMBL" id="CP001657">
    <property type="protein sequence ID" value="ACT14096.1"/>
    <property type="molecule type" value="Genomic_DNA"/>
</dbReference>
<dbReference type="RefSeq" id="WP_015841245.1">
    <property type="nucleotide sequence ID" value="NC_012917.1"/>
</dbReference>
<dbReference type="SMR" id="C6DC02"/>
<dbReference type="STRING" id="561230.PC1_3073"/>
<dbReference type="GeneID" id="67793091"/>
<dbReference type="KEGG" id="pct:PC1_3073"/>
<dbReference type="eggNOG" id="COG0481">
    <property type="taxonomic scope" value="Bacteria"/>
</dbReference>
<dbReference type="HOGENOM" id="CLU_009995_3_3_6"/>
<dbReference type="OrthoDB" id="9804431at2"/>
<dbReference type="Proteomes" id="UP000002736">
    <property type="component" value="Chromosome"/>
</dbReference>
<dbReference type="GO" id="GO:0005886">
    <property type="term" value="C:plasma membrane"/>
    <property type="evidence" value="ECO:0007669"/>
    <property type="project" value="UniProtKB-SubCell"/>
</dbReference>
<dbReference type="GO" id="GO:0005525">
    <property type="term" value="F:GTP binding"/>
    <property type="evidence" value="ECO:0007669"/>
    <property type="project" value="UniProtKB-UniRule"/>
</dbReference>
<dbReference type="GO" id="GO:0003924">
    <property type="term" value="F:GTPase activity"/>
    <property type="evidence" value="ECO:0007669"/>
    <property type="project" value="UniProtKB-UniRule"/>
</dbReference>
<dbReference type="GO" id="GO:0097216">
    <property type="term" value="F:guanosine tetraphosphate binding"/>
    <property type="evidence" value="ECO:0007669"/>
    <property type="project" value="UniProtKB-ARBA"/>
</dbReference>
<dbReference type="GO" id="GO:0043022">
    <property type="term" value="F:ribosome binding"/>
    <property type="evidence" value="ECO:0007669"/>
    <property type="project" value="UniProtKB-UniRule"/>
</dbReference>
<dbReference type="GO" id="GO:0003746">
    <property type="term" value="F:translation elongation factor activity"/>
    <property type="evidence" value="ECO:0007669"/>
    <property type="project" value="UniProtKB-UniRule"/>
</dbReference>
<dbReference type="GO" id="GO:0045727">
    <property type="term" value="P:positive regulation of translation"/>
    <property type="evidence" value="ECO:0007669"/>
    <property type="project" value="UniProtKB-UniRule"/>
</dbReference>
<dbReference type="CDD" id="cd03699">
    <property type="entry name" value="EF4_II"/>
    <property type="match status" value="1"/>
</dbReference>
<dbReference type="CDD" id="cd16260">
    <property type="entry name" value="EF4_III"/>
    <property type="match status" value="1"/>
</dbReference>
<dbReference type="CDD" id="cd01890">
    <property type="entry name" value="LepA"/>
    <property type="match status" value="1"/>
</dbReference>
<dbReference type="CDD" id="cd03709">
    <property type="entry name" value="lepA_C"/>
    <property type="match status" value="1"/>
</dbReference>
<dbReference type="FunFam" id="3.30.70.240:FF:000005">
    <property type="entry name" value="Elongation factor 4"/>
    <property type="match status" value="1"/>
</dbReference>
<dbReference type="FunFam" id="3.40.50.300:FF:000078">
    <property type="entry name" value="Elongation factor 4"/>
    <property type="match status" value="1"/>
</dbReference>
<dbReference type="FunFam" id="2.40.30.10:FF:000015">
    <property type="entry name" value="Translation factor GUF1, mitochondrial"/>
    <property type="match status" value="1"/>
</dbReference>
<dbReference type="FunFam" id="3.30.70.2570:FF:000001">
    <property type="entry name" value="Translation factor GUF1, mitochondrial"/>
    <property type="match status" value="1"/>
</dbReference>
<dbReference type="FunFam" id="3.30.70.870:FF:000004">
    <property type="entry name" value="Translation factor GUF1, mitochondrial"/>
    <property type="match status" value="1"/>
</dbReference>
<dbReference type="Gene3D" id="3.30.70.240">
    <property type="match status" value="1"/>
</dbReference>
<dbReference type="Gene3D" id="3.30.70.2570">
    <property type="entry name" value="Elongation factor 4, C-terminal domain"/>
    <property type="match status" value="1"/>
</dbReference>
<dbReference type="Gene3D" id="3.30.70.870">
    <property type="entry name" value="Elongation Factor G (Translational Gtpase), domain 3"/>
    <property type="match status" value="1"/>
</dbReference>
<dbReference type="Gene3D" id="3.40.50.300">
    <property type="entry name" value="P-loop containing nucleotide triphosphate hydrolases"/>
    <property type="match status" value="1"/>
</dbReference>
<dbReference type="Gene3D" id="2.40.30.10">
    <property type="entry name" value="Translation factors"/>
    <property type="match status" value="1"/>
</dbReference>
<dbReference type="HAMAP" id="MF_00071">
    <property type="entry name" value="LepA"/>
    <property type="match status" value="1"/>
</dbReference>
<dbReference type="InterPro" id="IPR006297">
    <property type="entry name" value="EF-4"/>
</dbReference>
<dbReference type="InterPro" id="IPR035647">
    <property type="entry name" value="EFG_III/V"/>
</dbReference>
<dbReference type="InterPro" id="IPR000640">
    <property type="entry name" value="EFG_V-like"/>
</dbReference>
<dbReference type="InterPro" id="IPR004161">
    <property type="entry name" value="EFTu-like_2"/>
</dbReference>
<dbReference type="InterPro" id="IPR031157">
    <property type="entry name" value="G_TR_CS"/>
</dbReference>
<dbReference type="InterPro" id="IPR038363">
    <property type="entry name" value="LepA_C_sf"/>
</dbReference>
<dbReference type="InterPro" id="IPR013842">
    <property type="entry name" value="LepA_CTD"/>
</dbReference>
<dbReference type="InterPro" id="IPR035654">
    <property type="entry name" value="LepA_IV"/>
</dbReference>
<dbReference type="InterPro" id="IPR027417">
    <property type="entry name" value="P-loop_NTPase"/>
</dbReference>
<dbReference type="InterPro" id="IPR005225">
    <property type="entry name" value="Small_GTP-bd"/>
</dbReference>
<dbReference type="InterPro" id="IPR000795">
    <property type="entry name" value="T_Tr_GTP-bd_dom"/>
</dbReference>
<dbReference type="NCBIfam" id="TIGR01393">
    <property type="entry name" value="lepA"/>
    <property type="match status" value="1"/>
</dbReference>
<dbReference type="NCBIfam" id="TIGR00231">
    <property type="entry name" value="small_GTP"/>
    <property type="match status" value="1"/>
</dbReference>
<dbReference type="PANTHER" id="PTHR43512:SF4">
    <property type="entry name" value="TRANSLATION FACTOR GUF1 HOMOLOG, CHLOROPLASTIC"/>
    <property type="match status" value="1"/>
</dbReference>
<dbReference type="PANTHER" id="PTHR43512">
    <property type="entry name" value="TRANSLATION FACTOR GUF1-RELATED"/>
    <property type="match status" value="1"/>
</dbReference>
<dbReference type="Pfam" id="PF00679">
    <property type="entry name" value="EFG_C"/>
    <property type="match status" value="1"/>
</dbReference>
<dbReference type="Pfam" id="PF00009">
    <property type="entry name" value="GTP_EFTU"/>
    <property type="match status" value="1"/>
</dbReference>
<dbReference type="Pfam" id="PF03144">
    <property type="entry name" value="GTP_EFTU_D2"/>
    <property type="match status" value="1"/>
</dbReference>
<dbReference type="Pfam" id="PF06421">
    <property type="entry name" value="LepA_C"/>
    <property type="match status" value="1"/>
</dbReference>
<dbReference type="PRINTS" id="PR00315">
    <property type="entry name" value="ELONGATNFCT"/>
</dbReference>
<dbReference type="SUPFAM" id="SSF54980">
    <property type="entry name" value="EF-G C-terminal domain-like"/>
    <property type="match status" value="2"/>
</dbReference>
<dbReference type="SUPFAM" id="SSF52540">
    <property type="entry name" value="P-loop containing nucleoside triphosphate hydrolases"/>
    <property type="match status" value="1"/>
</dbReference>
<dbReference type="PROSITE" id="PS00301">
    <property type="entry name" value="G_TR_1"/>
    <property type="match status" value="1"/>
</dbReference>
<dbReference type="PROSITE" id="PS51722">
    <property type="entry name" value="G_TR_2"/>
    <property type="match status" value="1"/>
</dbReference>
<organism>
    <name type="scientific">Pectobacterium carotovorum subsp. carotovorum (strain PC1)</name>
    <dbReference type="NCBI Taxonomy" id="561230"/>
    <lineage>
        <taxon>Bacteria</taxon>
        <taxon>Pseudomonadati</taxon>
        <taxon>Pseudomonadota</taxon>
        <taxon>Gammaproteobacteria</taxon>
        <taxon>Enterobacterales</taxon>
        <taxon>Pectobacteriaceae</taxon>
        <taxon>Pectobacterium</taxon>
    </lineage>
</organism>
<protein>
    <recommendedName>
        <fullName evidence="1">Elongation factor 4</fullName>
        <shortName evidence="1">EF-4</shortName>
        <ecNumber evidence="1">3.6.5.n1</ecNumber>
    </recommendedName>
    <alternativeName>
        <fullName evidence="1">Ribosomal back-translocase LepA</fullName>
    </alternativeName>
</protein>
<evidence type="ECO:0000255" key="1">
    <source>
        <dbReference type="HAMAP-Rule" id="MF_00071"/>
    </source>
</evidence>
<gene>
    <name evidence="1" type="primary">lepA</name>
    <name type="ordered locus">PC1_3073</name>
</gene>
<accession>C6DC02</accession>
<reference key="1">
    <citation type="submission" date="2009-07" db="EMBL/GenBank/DDBJ databases">
        <title>Complete sequence of Pectobacterium carotovorum subsp. carotovorum PC1.</title>
        <authorList>
            <consortium name="US DOE Joint Genome Institute"/>
            <person name="Lucas S."/>
            <person name="Copeland A."/>
            <person name="Lapidus A."/>
            <person name="Glavina del Rio T."/>
            <person name="Tice H."/>
            <person name="Bruce D."/>
            <person name="Goodwin L."/>
            <person name="Pitluck S."/>
            <person name="Munk A.C."/>
            <person name="Brettin T."/>
            <person name="Detter J.C."/>
            <person name="Han C."/>
            <person name="Tapia R."/>
            <person name="Larimer F."/>
            <person name="Land M."/>
            <person name="Hauser L."/>
            <person name="Kyrpides N."/>
            <person name="Mikhailova N."/>
            <person name="Balakrishnan V."/>
            <person name="Glasner J."/>
            <person name="Perna N.T."/>
        </authorList>
    </citation>
    <scope>NUCLEOTIDE SEQUENCE [LARGE SCALE GENOMIC DNA]</scope>
    <source>
        <strain>PC1</strain>
    </source>
</reference>
<feature type="chain" id="PRO_1000202456" description="Elongation factor 4">
    <location>
        <begin position="1"/>
        <end position="599"/>
    </location>
</feature>
<feature type="domain" description="tr-type G">
    <location>
        <begin position="2"/>
        <end position="184"/>
    </location>
</feature>
<feature type="binding site" evidence="1">
    <location>
        <begin position="14"/>
        <end position="19"/>
    </location>
    <ligand>
        <name>GTP</name>
        <dbReference type="ChEBI" id="CHEBI:37565"/>
    </ligand>
</feature>
<feature type="binding site" evidence="1">
    <location>
        <begin position="131"/>
        <end position="134"/>
    </location>
    <ligand>
        <name>GTP</name>
        <dbReference type="ChEBI" id="CHEBI:37565"/>
    </ligand>
</feature>
<keyword id="KW-0997">Cell inner membrane</keyword>
<keyword id="KW-1003">Cell membrane</keyword>
<keyword id="KW-0342">GTP-binding</keyword>
<keyword id="KW-0378">Hydrolase</keyword>
<keyword id="KW-0472">Membrane</keyword>
<keyword id="KW-0547">Nucleotide-binding</keyword>
<keyword id="KW-0648">Protein biosynthesis</keyword>
<proteinExistence type="inferred from homology"/>
<comment type="function">
    <text evidence="1">Required for accurate and efficient protein synthesis under certain stress conditions. May act as a fidelity factor of the translation reaction, by catalyzing a one-codon backward translocation of tRNAs on improperly translocated ribosomes. Back-translocation proceeds from a post-translocation (POST) complex to a pre-translocation (PRE) complex, thus giving elongation factor G a second chance to translocate the tRNAs correctly. Binds to ribosomes in a GTP-dependent manner.</text>
</comment>
<comment type="catalytic activity">
    <reaction evidence="1">
        <text>GTP + H2O = GDP + phosphate + H(+)</text>
        <dbReference type="Rhea" id="RHEA:19669"/>
        <dbReference type="ChEBI" id="CHEBI:15377"/>
        <dbReference type="ChEBI" id="CHEBI:15378"/>
        <dbReference type="ChEBI" id="CHEBI:37565"/>
        <dbReference type="ChEBI" id="CHEBI:43474"/>
        <dbReference type="ChEBI" id="CHEBI:58189"/>
        <dbReference type="EC" id="3.6.5.n1"/>
    </reaction>
</comment>
<comment type="subcellular location">
    <subcellularLocation>
        <location evidence="1">Cell inner membrane</location>
        <topology evidence="1">Peripheral membrane protein</topology>
        <orientation evidence="1">Cytoplasmic side</orientation>
    </subcellularLocation>
</comment>
<comment type="similarity">
    <text evidence="1">Belongs to the TRAFAC class translation factor GTPase superfamily. Classic translation factor GTPase family. LepA subfamily.</text>
</comment>